<feature type="transit peptide" description="Mitochondrion" evidence="2">
    <location>
        <begin position="1"/>
        <end position="36"/>
    </location>
</feature>
<feature type="chain" id="PRO_0000417337" description="NAD-dependent protein deacylase sirtuin-5, mitochondrial">
    <location>
        <begin position="37"/>
        <end position="310"/>
    </location>
</feature>
<feature type="domain" description="Deacetylase sirtuin-type" evidence="3">
    <location>
        <begin position="37"/>
        <end position="307"/>
    </location>
</feature>
<feature type="active site" description="Proton acceptor" evidence="3">
    <location>
        <position position="158"/>
    </location>
</feature>
<feature type="binding site" evidence="2">
    <location>
        <begin position="58"/>
        <end position="77"/>
    </location>
    <ligand>
        <name>NAD(+)</name>
        <dbReference type="ChEBI" id="CHEBI:57540"/>
    </ligand>
</feature>
<feature type="binding site" evidence="2">
    <location>
        <position position="102"/>
    </location>
    <ligand>
        <name>substrate</name>
    </ligand>
</feature>
<feature type="binding site" evidence="2">
    <location>
        <position position="105"/>
    </location>
    <ligand>
        <name>substrate</name>
    </ligand>
</feature>
<feature type="binding site" evidence="2">
    <location>
        <begin position="140"/>
        <end position="143"/>
    </location>
    <ligand>
        <name>NAD(+)</name>
        <dbReference type="ChEBI" id="CHEBI:57540"/>
    </ligand>
</feature>
<feature type="binding site" evidence="2">
    <location>
        <position position="166"/>
    </location>
    <ligand>
        <name>Zn(2+)</name>
        <dbReference type="ChEBI" id="CHEBI:29105"/>
    </ligand>
</feature>
<feature type="binding site" evidence="2">
    <location>
        <position position="169"/>
    </location>
    <ligand>
        <name>Zn(2+)</name>
        <dbReference type="ChEBI" id="CHEBI:29105"/>
    </ligand>
</feature>
<feature type="binding site" evidence="2">
    <location>
        <position position="207"/>
    </location>
    <ligand>
        <name>Zn(2+)</name>
        <dbReference type="ChEBI" id="CHEBI:29105"/>
    </ligand>
</feature>
<feature type="binding site" evidence="2">
    <location>
        <position position="212"/>
    </location>
    <ligand>
        <name>Zn(2+)</name>
        <dbReference type="ChEBI" id="CHEBI:29105"/>
    </ligand>
</feature>
<feature type="binding site" evidence="2">
    <location>
        <begin position="249"/>
        <end position="251"/>
    </location>
    <ligand>
        <name>NAD(+)</name>
        <dbReference type="ChEBI" id="CHEBI:57540"/>
    </ligand>
</feature>
<feature type="binding site" evidence="2">
    <location>
        <begin position="275"/>
        <end position="277"/>
    </location>
    <ligand>
        <name>NAD(+)</name>
        <dbReference type="ChEBI" id="CHEBI:57540"/>
    </ligand>
</feature>
<feature type="binding site" evidence="2">
    <location>
        <position position="293"/>
    </location>
    <ligand>
        <name>NAD(+)</name>
        <dbReference type="ChEBI" id="CHEBI:57540"/>
    </ligand>
</feature>
<gene>
    <name evidence="2" type="primary">SIRT5</name>
</gene>
<dbReference type="EC" id="2.3.1.-" evidence="2"/>
<dbReference type="RefSeq" id="XP_014991062.1">
    <property type="nucleotide sequence ID" value="XM_015135576.1"/>
</dbReference>
<dbReference type="RefSeq" id="XP_014991063.1">
    <property type="nucleotide sequence ID" value="XM_015135577.1"/>
</dbReference>
<dbReference type="RefSeq" id="XP_014991064.1">
    <property type="nucleotide sequence ID" value="XM_015135578.1"/>
</dbReference>
<dbReference type="RefSeq" id="XP_014991065.1">
    <property type="nucleotide sequence ID" value="XM_015135579.1"/>
</dbReference>
<dbReference type="RefSeq" id="XP_014991066.1">
    <property type="nucleotide sequence ID" value="XM_015135580.1"/>
</dbReference>
<dbReference type="RefSeq" id="XP_014991067.1">
    <property type="nucleotide sequence ID" value="XM_015135581.1"/>
</dbReference>
<dbReference type="RefSeq" id="XP_014991068.1">
    <property type="nucleotide sequence ID" value="XM_015135582.1"/>
</dbReference>
<dbReference type="RefSeq" id="XP_014991069.1">
    <property type="nucleotide sequence ID" value="XM_015135583.1"/>
</dbReference>
<dbReference type="SMR" id="F7EZ75"/>
<dbReference type="FunCoup" id="F7EZ75">
    <property type="interactions" value="1165"/>
</dbReference>
<dbReference type="STRING" id="9544.ENSMMUP00000011383"/>
<dbReference type="PaxDb" id="9544-ENSMMUP00000011382"/>
<dbReference type="GeneID" id="700855"/>
<dbReference type="KEGG" id="mcc:700855"/>
<dbReference type="CTD" id="23408"/>
<dbReference type="eggNOG" id="KOG2684">
    <property type="taxonomic scope" value="Eukaryota"/>
</dbReference>
<dbReference type="HOGENOM" id="CLU_023643_3_1_1"/>
<dbReference type="InParanoid" id="F7EZ75"/>
<dbReference type="OrthoDB" id="424302at2759"/>
<dbReference type="TreeFam" id="TF106183"/>
<dbReference type="Proteomes" id="UP000006718">
    <property type="component" value="Unassembled WGS sequence"/>
</dbReference>
<dbReference type="GO" id="GO:0005829">
    <property type="term" value="C:cytosol"/>
    <property type="evidence" value="ECO:0000250"/>
    <property type="project" value="UniProtKB"/>
</dbReference>
<dbReference type="GO" id="GO:0005759">
    <property type="term" value="C:mitochondrial matrix"/>
    <property type="evidence" value="ECO:0000318"/>
    <property type="project" value="GO_Central"/>
</dbReference>
<dbReference type="GO" id="GO:0005739">
    <property type="term" value="C:mitochondrion"/>
    <property type="evidence" value="ECO:0000250"/>
    <property type="project" value="UniProtKB"/>
</dbReference>
<dbReference type="GO" id="GO:0005634">
    <property type="term" value="C:nucleus"/>
    <property type="evidence" value="ECO:0000318"/>
    <property type="project" value="GO_Central"/>
</dbReference>
<dbReference type="GO" id="GO:0017136">
    <property type="term" value="F:histone deacetylase activity, NAD-dependent"/>
    <property type="evidence" value="ECO:0000318"/>
    <property type="project" value="GO_Central"/>
</dbReference>
<dbReference type="GO" id="GO:0070403">
    <property type="term" value="F:NAD+ binding"/>
    <property type="evidence" value="ECO:0000318"/>
    <property type="project" value="GO_Central"/>
</dbReference>
<dbReference type="GO" id="GO:0061697">
    <property type="term" value="F:protein-glutaryllysine deglutarylase activity"/>
    <property type="evidence" value="ECO:0000318"/>
    <property type="project" value="GO_Central"/>
</dbReference>
<dbReference type="GO" id="GO:0036054">
    <property type="term" value="F:protein-malonyllysine demalonylase activity"/>
    <property type="evidence" value="ECO:0000250"/>
    <property type="project" value="UniProtKB"/>
</dbReference>
<dbReference type="GO" id="GO:0036055">
    <property type="term" value="F:protein-succinyllysine desuccinylase activity"/>
    <property type="evidence" value="ECO:0000250"/>
    <property type="project" value="UniProtKB"/>
</dbReference>
<dbReference type="GO" id="GO:0008270">
    <property type="term" value="F:zinc ion binding"/>
    <property type="evidence" value="ECO:0007669"/>
    <property type="project" value="UniProtKB-UniRule"/>
</dbReference>
<dbReference type="GO" id="GO:0036046">
    <property type="term" value="P:protein demalonylation"/>
    <property type="evidence" value="ECO:0000250"/>
    <property type="project" value="UniProtKB"/>
</dbReference>
<dbReference type="GO" id="GO:0036048">
    <property type="term" value="P:protein desuccinylation"/>
    <property type="evidence" value="ECO:0000250"/>
    <property type="project" value="UniProtKB"/>
</dbReference>
<dbReference type="GO" id="GO:0010566">
    <property type="term" value="P:regulation of ketone biosynthetic process"/>
    <property type="evidence" value="ECO:0000250"/>
    <property type="project" value="UniProtKB"/>
</dbReference>
<dbReference type="CDD" id="cd01412">
    <property type="entry name" value="SIRT5_Af1_CobB"/>
    <property type="match status" value="1"/>
</dbReference>
<dbReference type="FunFam" id="3.30.1600.10:FF:000005">
    <property type="entry name" value="NAD-dependent protein deacylase sirtuin-5, mitochondrial"/>
    <property type="match status" value="1"/>
</dbReference>
<dbReference type="Gene3D" id="3.30.1600.10">
    <property type="entry name" value="SIR2/SIRT2 'Small Domain"/>
    <property type="match status" value="1"/>
</dbReference>
<dbReference type="Gene3D" id="3.40.50.1220">
    <property type="entry name" value="TPP-binding domain"/>
    <property type="match status" value="1"/>
</dbReference>
<dbReference type="HAMAP" id="MF_01121">
    <property type="entry name" value="Sirtuin_ClassIII"/>
    <property type="match status" value="1"/>
</dbReference>
<dbReference type="InterPro" id="IPR029035">
    <property type="entry name" value="DHS-like_NAD/FAD-binding_dom"/>
</dbReference>
<dbReference type="InterPro" id="IPR050134">
    <property type="entry name" value="NAD-dep_sirtuin_deacylases"/>
</dbReference>
<dbReference type="InterPro" id="IPR003000">
    <property type="entry name" value="Sirtuin"/>
</dbReference>
<dbReference type="InterPro" id="IPR026591">
    <property type="entry name" value="Sirtuin_cat_small_dom_sf"/>
</dbReference>
<dbReference type="InterPro" id="IPR027546">
    <property type="entry name" value="Sirtuin_class_III"/>
</dbReference>
<dbReference type="InterPro" id="IPR026590">
    <property type="entry name" value="Ssirtuin_cat_dom"/>
</dbReference>
<dbReference type="PANTHER" id="PTHR11085">
    <property type="entry name" value="NAD-DEPENDENT PROTEIN DEACYLASE SIRTUIN-5, MITOCHONDRIAL-RELATED"/>
    <property type="match status" value="1"/>
</dbReference>
<dbReference type="PANTHER" id="PTHR11085:SF10">
    <property type="entry name" value="NAD-DEPENDENT PROTEIN DEACYLASE SIRTUIN-5, MITOCHONDRIAL-RELATED"/>
    <property type="match status" value="1"/>
</dbReference>
<dbReference type="Pfam" id="PF02146">
    <property type="entry name" value="SIR2"/>
    <property type="match status" value="1"/>
</dbReference>
<dbReference type="SUPFAM" id="SSF52467">
    <property type="entry name" value="DHS-like NAD/FAD-binding domain"/>
    <property type="match status" value="1"/>
</dbReference>
<dbReference type="PROSITE" id="PS50305">
    <property type="entry name" value="SIRTUIN"/>
    <property type="match status" value="1"/>
</dbReference>
<accession>F7EZ75</accession>
<organism>
    <name type="scientific">Macaca mulatta</name>
    <name type="common">Rhesus macaque</name>
    <dbReference type="NCBI Taxonomy" id="9544"/>
    <lineage>
        <taxon>Eukaryota</taxon>
        <taxon>Metazoa</taxon>
        <taxon>Chordata</taxon>
        <taxon>Craniata</taxon>
        <taxon>Vertebrata</taxon>
        <taxon>Euteleostomi</taxon>
        <taxon>Mammalia</taxon>
        <taxon>Eutheria</taxon>
        <taxon>Euarchontoglires</taxon>
        <taxon>Primates</taxon>
        <taxon>Haplorrhini</taxon>
        <taxon>Catarrhini</taxon>
        <taxon>Cercopithecidae</taxon>
        <taxon>Cercopithecinae</taxon>
        <taxon>Macaca</taxon>
    </lineage>
</organism>
<sequence length="310" mass="33881">MRPLQIVPSRLISQLYCGLKPPASTRNQICLKMARPSSSMADFRKCFAKAKHIVIISGAGVSAESGVPTFRGAGGYWRKWQAQDLATPLAFAHNPSRVWEFYHYRREVMGSKEPNAGHRAIAECETRLGKQGRRVVVITQNIDELHRKAGTKNLLEIHGSLFKTRCTSCGIVAENYKSPICPALSGKGAPEPGTQDASIPVEKLPRCEEAGCGGLLRPHVVWFGENLDPAILEEVDKELGRCDLCLVVGTSSVVYPAAMFAPQVAARGVPVAEFNTETTPATNRFRFHFQGPCGTTLPEALARHENETVS</sequence>
<proteinExistence type="inferred from homology"/>
<keyword id="KW-0963">Cytoplasm</keyword>
<keyword id="KW-0479">Metal-binding</keyword>
<keyword id="KW-0496">Mitochondrion</keyword>
<keyword id="KW-0520">NAD</keyword>
<keyword id="KW-0539">Nucleus</keyword>
<keyword id="KW-1185">Reference proteome</keyword>
<keyword id="KW-0808">Transferase</keyword>
<keyword id="KW-0809">Transit peptide</keyword>
<keyword id="KW-0862">Zinc</keyword>
<evidence type="ECO:0000250" key="1">
    <source>
        <dbReference type="UniProtKB" id="Q9NXA8"/>
    </source>
</evidence>
<evidence type="ECO:0000255" key="2">
    <source>
        <dbReference type="HAMAP-Rule" id="MF_03160"/>
    </source>
</evidence>
<evidence type="ECO:0000255" key="3">
    <source>
        <dbReference type="PROSITE-ProRule" id="PRU00236"/>
    </source>
</evidence>
<name>SIR5_MACMU</name>
<comment type="function">
    <text evidence="2">NAD-dependent lysine demalonylase, desuccinylase and deglutarylase that specifically removes malonyl, succinyl and glutaryl groups on target proteins. Activates CPS1 and contributes to the regulation of blood ammonia levels during prolonged fasting: acts by mediating desuccinylation and deglutarylation of CPS1, thereby increasing CPS1 activity in response to elevated NAD levels during fasting. Activates SOD1 by mediating its desuccinylation, leading to reduced reactive oxygen species. Activates SHMT2 by mediating its desuccinylation. Modulates ketogenesis through the desuccinylation and activation of HMGCS2. Has weak NAD-dependent protein deacetylase activity; however this activity may not be physiologically relevant in vivo. Can deacetylate cytochrome c (CYCS) and a number of other proteins in vitro such as UOX.</text>
</comment>
<comment type="catalytic activity">
    <reaction evidence="2">
        <text>N(6)-malonyl-L-lysyl-[protein] + NAD(+) + H2O = 2''-O-malonyl-ADP-D-ribose + nicotinamide + L-lysyl-[protein]</text>
        <dbReference type="Rhea" id="RHEA:47672"/>
        <dbReference type="Rhea" id="RHEA-COMP:9752"/>
        <dbReference type="Rhea" id="RHEA-COMP:11878"/>
        <dbReference type="ChEBI" id="CHEBI:15377"/>
        <dbReference type="ChEBI" id="CHEBI:17154"/>
        <dbReference type="ChEBI" id="CHEBI:29969"/>
        <dbReference type="ChEBI" id="CHEBI:57540"/>
        <dbReference type="ChEBI" id="CHEBI:87831"/>
        <dbReference type="ChEBI" id="CHEBI:87833"/>
    </reaction>
</comment>
<comment type="catalytic activity">
    <reaction evidence="2">
        <text>N(6)-succinyl-L-lysyl-[protein] + NAD(+) + H2O = 2''-O-succinyl-ADP-D-ribose + nicotinamide + L-lysyl-[protein]</text>
        <dbReference type="Rhea" id="RHEA:47668"/>
        <dbReference type="Rhea" id="RHEA-COMP:9752"/>
        <dbReference type="Rhea" id="RHEA-COMP:11877"/>
        <dbReference type="ChEBI" id="CHEBI:15377"/>
        <dbReference type="ChEBI" id="CHEBI:17154"/>
        <dbReference type="ChEBI" id="CHEBI:29969"/>
        <dbReference type="ChEBI" id="CHEBI:57540"/>
        <dbReference type="ChEBI" id="CHEBI:87830"/>
        <dbReference type="ChEBI" id="CHEBI:87832"/>
    </reaction>
</comment>
<comment type="catalytic activity">
    <reaction evidence="2">
        <text>N(6)-glutaryl-L-lysyl-[protein] + NAD(+) + H2O = 2''-O-glutaryl-ADP-D-ribose + nicotinamide + L-lysyl-[protein]</text>
        <dbReference type="Rhea" id="RHEA:47664"/>
        <dbReference type="Rhea" id="RHEA-COMP:9752"/>
        <dbReference type="Rhea" id="RHEA-COMP:11875"/>
        <dbReference type="ChEBI" id="CHEBI:15377"/>
        <dbReference type="ChEBI" id="CHEBI:17154"/>
        <dbReference type="ChEBI" id="CHEBI:29969"/>
        <dbReference type="ChEBI" id="CHEBI:57540"/>
        <dbReference type="ChEBI" id="CHEBI:87828"/>
        <dbReference type="ChEBI" id="CHEBI:87829"/>
    </reaction>
</comment>
<comment type="cofactor">
    <cofactor evidence="2">
        <name>Zn(2+)</name>
        <dbReference type="ChEBI" id="CHEBI:29105"/>
    </cofactor>
    <text evidence="2">Binds 1 zinc ion per subunit.</text>
</comment>
<comment type="subunit">
    <text evidence="1 2">Monomer. Homodimer. Interacts with CPS1. Interacts with PCCA (By similarity).</text>
</comment>
<comment type="subcellular location">
    <subcellularLocation>
        <location evidence="2">Mitochondrion</location>
    </subcellularLocation>
    <subcellularLocation>
        <location evidence="2">Cytoplasm</location>
        <location evidence="2">Cytosol</location>
    </subcellularLocation>
    <subcellularLocation>
        <location evidence="2">Nucleus</location>
    </subcellularLocation>
    <text evidence="2">Mainly mitochondrial. Also present extramitochondrially, with a fraction present in the cytosol and very small amounts also detected in the nucleus.</text>
</comment>
<comment type="domain">
    <text evidence="2">In contrast to class I sirtuins, class III sirtuins have only weak deacetylase activity. Difference in substrate specificity is probably due to a larger hydrophobic pocket with 2 residues (Tyr-102 and Arg-105) that bind to malonylated and succinylated substrates and define the specificity.</text>
</comment>
<comment type="similarity">
    <text evidence="2">Belongs to the sirtuin family. Class III subfamily.</text>
</comment>
<reference key="1">
    <citation type="journal article" date="2007" name="Science">
        <title>Evolutionary and biomedical insights from the rhesus macaque genome.</title>
        <authorList>
            <person name="Gibbs R.A."/>
            <person name="Rogers J."/>
            <person name="Katze M.G."/>
            <person name="Bumgarner R."/>
            <person name="Weinstock G.M."/>
            <person name="Mardis E.R."/>
            <person name="Remington K.A."/>
            <person name="Strausberg R.L."/>
            <person name="Venter J.C."/>
            <person name="Wilson R.K."/>
            <person name="Batzer M.A."/>
            <person name="Bustamante C.D."/>
            <person name="Eichler E.E."/>
            <person name="Hahn M.W."/>
            <person name="Hardison R.C."/>
            <person name="Makova K.D."/>
            <person name="Miller W."/>
            <person name="Milosavljevic A."/>
            <person name="Palermo R.E."/>
            <person name="Siepel A."/>
            <person name="Sikela J.M."/>
            <person name="Attaway T."/>
            <person name="Bell S."/>
            <person name="Bernard K.E."/>
            <person name="Buhay C.J."/>
            <person name="Chandrabose M.N."/>
            <person name="Dao M."/>
            <person name="Davis C."/>
            <person name="Delehaunty K.D."/>
            <person name="Ding Y."/>
            <person name="Dinh H.H."/>
            <person name="Dugan-Rocha S."/>
            <person name="Fulton L.A."/>
            <person name="Gabisi R.A."/>
            <person name="Garner T.T."/>
            <person name="Godfrey J."/>
            <person name="Hawes A.C."/>
            <person name="Hernandez J."/>
            <person name="Hines S."/>
            <person name="Holder M."/>
            <person name="Hume J."/>
            <person name="Jhangiani S.N."/>
            <person name="Joshi V."/>
            <person name="Khan Z.M."/>
            <person name="Kirkness E.F."/>
            <person name="Cree A."/>
            <person name="Fowler R.G."/>
            <person name="Lee S."/>
            <person name="Lewis L.R."/>
            <person name="Li Z."/>
            <person name="Liu Y.-S."/>
            <person name="Moore S.M."/>
            <person name="Muzny D."/>
            <person name="Nazareth L.V."/>
            <person name="Ngo D.N."/>
            <person name="Okwuonu G.O."/>
            <person name="Pai G."/>
            <person name="Parker D."/>
            <person name="Paul H.A."/>
            <person name="Pfannkoch C."/>
            <person name="Pohl C.S."/>
            <person name="Rogers Y.-H.C."/>
            <person name="Ruiz S.J."/>
            <person name="Sabo A."/>
            <person name="Santibanez J."/>
            <person name="Schneider B.W."/>
            <person name="Smith S.M."/>
            <person name="Sodergren E."/>
            <person name="Svatek A.F."/>
            <person name="Utterback T.R."/>
            <person name="Vattathil S."/>
            <person name="Warren W."/>
            <person name="White C.S."/>
            <person name="Chinwalla A.T."/>
            <person name="Feng Y."/>
            <person name="Halpern A.L."/>
            <person name="Hillier L.W."/>
            <person name="Huang X."/>
            <person name="Minx P."/>
            <person name="Nelson J.O."/>
            <person name="Pepin K.H."/>
            <person name="Qin X."/>
            <person name="Sutton G.G."/>
            <person name="Venter E."/>
            <person name="Walenz B.P."/>
            <person name="Wallis J.W."/>
            <person name="Worley K.C."/>
            <person name="Yang S.-P."/>
            <person name="Jones S.M."/>
            <person name="Marra M.A."/>
            <person name="Rocchi M."/>
            <person name="Schein J.E."/>
            <person name="Baertsch R."/>
            <person name="Clarke L."/>
            <person name="Csuros M."/>
            <person name="Glasscock J."/>
            <person name="Harris R.A."/>
            <person name="Havlak P."/>
            <person name="Jackson A.R."/>
            <person name="Jiang H."/>
            <person name="Liu Y."/>
            <person name="Messina D.N."/>
            <person name="Shen Y."/>
            <person name="Song H.X.-Z."/>
            <person name="Wylie T."/>
            <person name="Zhang L."/>
            <person name="Birney E."/>
            <person name="Han K."/>
            <person name="Konkel M.K."/>
            <person name="Lee J."/>
            <person name="Smit A.F.A."/>
            <person name="Ullmer B."/>
            <person name="Wang H."/>
            <person name="Xing J."/>
            <person name="Burhans R."/>
            <person name="Cheng Z."/>
            <person name="Karro J.E."/>
            <person name="Ma J."/>
            <person name="Raney B."/>
            <person name="She X."/>
            <person name="Cox M.J."/>
            <person name="Demuth J.P."/>
            <person name="Dumas L.J."/>
            <person name="Han S.-G."/>
            <person name="Hopkins J."/>
            <person name="Karimpour-Fard A."/>
            <person name="Kim Y.H."/>
            <person name="Pollack J.R."/>
            <person name="Vinar T."/>
            <person name="Addo-Quaye C."/>
            <person name="Degenhardt J."/>
            <person name="Denby A."/>
            <person name="Hubisz M.J."/>
            <person name="Indap A."/>
            <person name="Kosiol C."/>
            <person name="Lahn B.T."/>
            <person name="Lawson H.A."/>
            <person name="Marklein A."/>
            <person name="Nielsen R."/>
            <person name="Vallender E.J."/>
            <person name="Clark A.G."/>
            <person name="Ferguson B."/>
            <person name="Hernandez R.D."/>
            <person name="Hirani K."/>
            <person name="Kehrer-Sawatzki H."/>
            <person name="Kolb J."/>
            <person name="Patil S."/>
            <person name="Pu L.-L."/>
            <person name="Ren Y."/>
            <person name="Smith D.G."/>
            <person name="Wheeler D.A."/>
            <person name="Schenck I."/>
            <person name="Ball E.V."/>
            <person name="Chen R."/>
            <person name="Cooper D.N."/>
            <person name="Giardine B."/>
            <person name="Hsu F."/>
            <person name="Kent W.J."/>
            <person name="Lesk A."/>
            <person name="Nelson D.L."/>
            <person name="O'brien W.E."/>
            <person name="Pruefer K."/>
            <person name="Stenson P.D."/>
            <person name="Wallace J.C."/>
            <person name="Ke H."/>
            <person name="Liu X.-M."/>
            <person name="Wang P."/>
            <person name="Xiang A.P."/>
            <person name="Yang F."/>
            <person name="Barber G.P."/>
            <person name="Haussler D."/>
            <person name="Karolchik D."/>
            <person name="Kern A.D."/>
            <person name="Kuhn R.M."/>
            <person name="Smith K.E."/>
            <person name="Zwieg A.S."/>
        </authorList>
    </citation>
    <scope>NUCLEOTIDE SEQUENCE [LARGE SCALE GENOMIC DNA]</scope>
    <source>
        <strain>17573</strain>
    </source>
</reference>
<protein>
    <recommendedName>
        <fullName evidence="2">NAD-dependent protein deacylase sirtuin-5, mitochondrial</fullName>
        <ecNumber evidence="2">2.3.1.-</ecNumber>
    </recommendedName>
    <alternativeName>
        <fullName evidence="2">Regulatory protein SIR2 homolog 5</fullName>
    </alternativeName>
    <alternativeName>
        <fullName evidence="2">SIR2-like protein 5</fullName>
    </alternativeName>
</protein>